<organism>
    <name type="scientific">Arabidopsis thaliana</name>
    <name type="common">Mouse-ear cress</name>
    <dbReference type="NCBI Taxonomy" id="3702"/>
    <lineage>
        <taxon>Eukaryota</taxon>
        <taxon>Viridiplantae</taxon>
        <taxon>Streptophyta</taxon>
        <taxon>Embryophyta</taxon>
        <taxon>Tracheophyta</taxon>
        <taxon>Spermatophyta</taxon>
        <taxon>Magnoliopsida</taxon>
        <taxon>eudicotyledons</taxon>
        <taxon>Gunneridae</taxon>
        <taxon>Pentapetalae</taxon>
        <taxon>rosids</taxon>
        <taxon>malvids</taxon>
        <taxon>Brassicales</taxon>
        <taxon>Brassicaceae</taxon>
        <taxon>Camelineae</taxon>
        <taxon>Arabidopsis</taxon>
    </lineage>
</organism>
<keyword id="KW-0031">Aminopeptidase</keyword>
<keyword id="KW-0150">Chloroplast</keyword>
<keyword id="KW-0378">Hydrolase</keyword>
<keyword id="KW-0479">Metal-binding</keyword>
<keyword id="KW-0496">Mitochondrion</keyword>
<keyword id="KW-0934">Plastid</keyword>
<keyword id="KW-0645">Protease</keyword>
<keyword id="KW-1185">Reference proteome</keyword>
<keyword id="KW-0809">Transit peptide</keyword>
<protein>
    <recommendedName>
        <fullName evidence="1">Methionine aminopeptidase 1C, chloroplastic/mitochondrial</fullName>
        <shortName evidence="1">MAP 1C</shortName>
        <shortName evidence="1">MetAP 1C</shortName>
        <ecNumber evidence="1">3.4.11.18</ecNumber>
    </recommendedName>
    <alternativeName>
        <fullName evidence="1">Peptidase M 1C</fullName>
    </alternativeName>
</protein>
<sequence length="344" mass="37679">MLQKISQSISLCNGDQFKPLIYLAGAPTNFISSPLSGKKKSSSLRIKRIQQLQSTLEDRINPPLVCGTVSPRLSVPDHILKPLYVESSKVPEISSELQIPDSIGIVKMKKACELAARVLDYAGTLVRPFVTTDEIDKAVHQMVIEFGAYPSPLGYGGFPKSVCTSVNECMFHGIPDSRPLQNGDIINIDVAVYLDGYHGDTSKTFLCGDVNGSLKQLVKVTEECLEKGISVCKDGASFKQIGKIISEHAAKYGYNMERFIGHGVGTVLHSEPLIYLHSNYDYELEYMIEGQTFTLEPILTIGTTEFVTWPDKWTIVTADGGPAAQFEHTILITTTGAEILTISS</sequence>
<feature type="transit peptide" description="Chloroplast and mitochondrion" evidence="1">
    <location>
        <begin position="1"/>
        <end status="unknown"/>
    </location>
</feature>
<feature type="chain" id="PRO_0000045806" description="Methionine aminopeptidase 1C, chloroplastic/mitochondrial">
    <location>
        <begin status="unknown"/>
        <end position="344"/>
    </location>
</feature>
<feature type="binding site" evidence="1">
    <location>
        <position position="172"/>
    </location>
    <ligand>
        <name>substrate</name>
    </ligand>
</feature>
<feature type="binding site" evidence="1">
    <location>
        <position position="189"/>
    </location>
    <ligand>
        <name>a divalent metal cation</name>
        <dbReference type="ChEBI" id="CHEBI:60240"/>
        <label>1</label>
    </ligand>
</feature>
<feature type="binding site" evidence="1">
    <location>
        <position position="200"/>
    </location>
    <ligand>
        <name>a divalent metal cation</name>
        <dbReference type="ChEBI" id="CHEBI:60240"/>
        <label>1</label>
    </ligand>
</feature>
<feature type="binding site" evidence="1">
    <location>
        <position position="200"/>
    </location>
    <ligand>
        <name>a divalent metal cation</name>
        <dbReference type="ChEBI" id="CHEBI:60240"/>
        <label>2</label>
        <note>catalytic</note>
    </ligand>
</feature>
<feature type="binding site" evidence="1">
    <location>
        <position position="262"/>
    </location>
    <ligand>
        <name>a divalent metal cation</name>
        <dbReference type="ChEBI" id="CHEBI:60240"/>
        <label>2</label>
        <note>catalytic</note>
    </ligand>
</feature>
<feature type="binding site" evidence="1">
    <location>
        <position position="269"/>
    </location>
    <ligand>
        <name>substrate</name>
    </ligand>
</feature>
<feature type="binding site" evidence="1">
    <location>
        <position position="296"/>
    </location>
    <ligand>
        <name>a divalent metal cation</name>
        <dbReference type="ChEBI" id="CHEBI:60240"/>
        <label>2</label>
        <note>catalytic</note>
    </ligand>
</feature>
<feature type="binding site" evidence="1">
    <location>
        <position position="327"/>
    </location>
    <ligand>
        <name>a divalent metal cation</name>
        <dbReference type="ChEBI" id="CHEBI:60240"/>
        <label>1</label>
    </ligand>
</feature>
<feature type="binding site" evidence="1">
    <location>
        <position position="327"/>
    </location>
    <ligand>
        <name>a divalent metal cation</name>
        <dbReference type="ChEBI" id="CHEBI:60240"/>
        <label>2</label>
        <note>catalytic</note>
    </ligand>
</feature>
<feature type="sequence conflict" description="In Ref. 1; AAG33976." evidence="3" ref="1">
    <original>V</original>
    <variation>L</variation>
    <location>
        <position position="264"/>
    </location>
</feature>
<evidence type="ECO:0000255" key="1">
    <source>
        <dbReference type="HAMAP-Rule" id="MF_03174"/>
    </source>
</evidence>
<evidence type="ECO:0000269" key="2">
    <source>
    </source>
</evidence>
<evidence type="ECO:0000305" key="3"/>
<gene>
    <name type="primary">MAP1C</name>
    <name type="ordered locus">At3g25740</name>
    <name type="ORF">K13N2.8</name>
</gene>
<proteinExistence type="evidence at transcript level"/>
<name>MAP1C_ARATH</name>
<comment type="function">
    <text evidence="1">Removes the N-terminal methionine from nascent proteins. The N-terminal methionine is often cleaved when the second residue in the primary sequence is small and uncharged (Met-Ala-, Cys, Gly, Pro, Ser, Thr, or Val).</text>
</comment>
<comment type="catalytic activity">
    <reaction evidence="1">
        <text>Release of N-terminal amino acids, preferentially methionine, from peptides and arylamides.</text>
        <dbReference type="EC" id="3.4.11.18"/>
    </reaction>
</comment>
<comment type="cofactor">
    <cofactor evidence="1">
        <name>Co(2+)</name>
        <dbReference type="ChEBI" id="CHEBI:48828"/>
    </cofactor>
    <cofactor evidence="1">
        <name>Zn(2+)</name>
        <dbReference type="ChEBI" id="CHEBI:29105"/>
    </cofactor>
    <cofactor evidence="1">
        <name>Mn(2+)</name>
        <dbReference type="ChEBI" id="CHEBI:29035"/>
    </cofactor>
    <cofactor evidence="1">
        <name>Fe(2+)</name>
        <dbReference type="ChEBI" id="CHEBI:29033"/>
    </cofactor>
    <text evidence="1">Binds 2 divalent metal cations per subunit. Has a high-affinity and a low affinity metal-binding site. The true nature of the physiological cofactor is under debate. The enzyme is active with cobalt, zinc, manganese or divalent iron ions. Most likely, methionine aminopeptidases function as mononuclear Fe(2+)-metalloproteases under physiological conditions, and the catalytically relevant metal-binding site has been assigned to the histidine-containing high-affinity site.</text>
</comment>
<comment type="subcellular location">
    <subcellularLocation>
        <location evidence="1 2">Plastid</location>
        <location evidence="1 2">Chloroplast</location>
    </subcellularLocation>
    <subcellularLocation>
        <location evidence="1 2">Mitochondrion</location>
    </subcellularLocation>
</comment>
<comment type="tissue specificity">
    <text evidence="2">Ubiquitous.</text>
</comment>
<comment type="similarity">
    <text evidence="1">Belongs to the peptidase M24A family. Methionine aminopeptidase type 1 subfamily.</text>
</comment>
<comment type="sequence caution" evidence="3">
    <conflict type="erroneous gene model prediction">
        <sequence resource="EMBL-CDS" id="BAA95761"/>
    </conflict>
</comment>
<dbReference type="EC" id="3.4.11.18" evidence="1"/>
<dbReference type="EMBL" id="AF250962">
    <property type="protein sequence ID" value="AAG33976.1"/>
    <property type="molecule type" value="mRNA"/>
</dbReference>
<dbReference type="EMBL" id="AB028607">
    <property type="protein sequence ID" value="BAA95761.1"/>
    <property type="status" value="ALT_SEQ"/>
    <property type="molecule type" value="Genomic_DNA"/>
</dbReference>
<dbReference type="EMBL" id="CP002686">
    <property type="protein sequence ID" value="AEE77063.1"/>
    <property type="molecule type" value="Genomic_DNA"/>
</dbReference>
<dbReference type="RefSeq" id="NP_189202.1">
    <property type="nucleotide sequence ID" value="NM_113473.3"/>
</dbReference>
<dbReference type="SMR" id="Q9FV51"/>
<dbReference type="FunCoup" id="Q9FV51">
    <property type="interactions" value="555"/>
</dbReference>
<dbReference type="STRING" id="3702.Q9FV51"/>
<dbReference type="MEROPS" id="M24.A07"/>
<dbReference type="PaxDb" id="3702-AT3G25740.1"/>
<dbReference type="ProteomicsDB" id="238844"/>
<dbReference type="EnsemblPlants" id="AT3G25740.1">
    <property type="protein sequence ID" value="AT3G25740.1"/>
    <property type="gene ID" value="AT3G25740"/>
</dbReference>
<dbReference type="GeneID" id="822165"/>
<dbReference type="Gramene" id="AT3G25740.1">
    <property type="protein sequence ID" value="AT3G25740.1"/>
    <property type="gene ID" value="AT3G25740"/>
</dbReference>
<dbReference type="KEGG" id="ath:AT3G25740"/>
<dbReference type="Araport" id="AT3G25740"/>
<dbReference type="TAIR" id="AT3G25740">
    <property type="gene designation" value="MAP1B"/>
</dbReference>
<dbReference type="eggNOG" id="KOG2738">
    <property type="taxonomic scope" value="Eukaryota"/>
</dbReference>
<dbReference type="HOGENOM" id="CLU_015857_1_5_1"/>
<dbReference type="InParanoid" id="Q9FV51"/>
<dbReference type="OMA" id="YGYNMER"/>
<dbReference type="PhylomeDB" id="Q9FV51"/>
<dbReference type="PRO" id="PR:Q9FV51"/>
<dbReference type="Proteomes" id="UP000006548">
    <property type="component" value="Chromosome 3"/>
</dbReference>
<dbReference type="ExpressionAtlas" id="Q9FV51">
    <property type="expression patterns" value="baseline and differential"/>
</dbReference>
<dbReference type="GO" id="GO:0009507">
    <property type="term" value="C:chloroplast"/>
    <property type="evidence" value="ECO:0000304"/>
    <property type="project" value="TAIR"/>
</dbReference>
<dbReference type="GO" id="GO:0005739">
    <property type="term" value="C:mitochondrion"/>
    <property type="evidence" value="ECO:0007669"/>
    <property type="project" value="UniProtKB-SubCell"/>
</dbReference>
<dbReference type="GO" id="GO:0004239">
    <property type="term" value="F:initiator methionyl aminopeptidase activity"/>
    <property type="evidence" value="ECO:0007669"/>
    <property type="project" value="UniProtKB-UniRule"/>
</dbReference>
<dbReference type="GO" id="GO:0046872">
    <property type="term" value="F:metal ion binding"/>
    <property type="evidence" value="ECO:0007669"/>
    <property type="project" value="UniProtKB-UniRule"/>
</dbReference>
<dbReference type="GO" id="GO:0070006">
    <property type="term" value="F:metalloaminopeptidase activity"/>
    <property type="evidence" value="ECO:0007669"/>
    <property type="project" value="UniProtKB-UniRule"/>
</dbReference>
<dbReference type="GO" id="GO:0031365">
    <property type="term" value="P:N-terminal protein amino acid modification"/>
    <property type="evidence" value="ECO:0000304"/>
    <property type="project" value="TAIR"/>
</dbReference>
<dbReference type="GO" id="GO:0006508">
    <property type="term" value="P:proteolysis"/>
    <property type="evidence" value="ECO:0007669"/>
    <property type="project" value="UniProtKB-KW"/>
</dbReference>
<dbReference type="CDD" id="cd01086">
    <property type="entry name" value="MetAP1"/>
    <property type="match status" value="1"/>
</dbReference>
<dbReference type="Gene3D" id="3.90.230.10">
    <property type="entry name" value="Creatinase/methionine aminopeptidase superfamily"/>
    <property type="match status" value="1"/>
</dbReference>
<dbReference type="HAMAP" id="MF_01974">
    <property type="entry name" value="MetAP_1"/>
    <property type="match status" value="1"/>
</dbReference>
<dbReference type="InterPro" id="IPR036005">
    <property type="entry name" value="Creatinase/aminopeptidase-like"/>
</dbReference>
<dbReference type="InterPro" id="IPR000994">
    <property type="entry name" value="Pept_M24"/>
</dbReference>
<dbReference type="InterPro" id="IPR001714">
    <property type="entry name" value="Pept_M24_MAP"/>
</dbReference>
<dbReference type="InterPro" id="IPR002467">
    <property type="entry name" value="Pept_M24A_MAP1"/>
</dbReference>
<dbReference type="NCBIfam" id="TIGR00500">
    <property type="entry name" value="met_pdase_I"/>
    <property type="match status" value="1"/>
</dbReference>
<dbReference type="PANTHER" id="PTHR43330">
    <property type="entry name" value="METHIONINE AMINOPEPTIDASE"/>
    <property type="match status" value="1"/>
</dbReference>
<dbReference type="PANTHER" id="PTHR43330:SF21">
    <property type="entry name" value="METHIONINE AMINOPEPTIDASE 1C, CHLOROPLASTIC_MITOCHONDRIAL"/>
    <property type="match status" value="1"/>
</dbReference>
<dbReference type="Pfam" id="PF00557">
    <property type="entry name" value="Peptidase_M24"/>
    <property type="match status" value="1"/>
</dbReference>
<dbReference type="PRINTS" id="PR00599">
    <property type="entry name" value="MAPEPTIDASE"/>
</dbReference>
<dbReference type="SUPFAM" id="SSF55920">
    <property type="entry name" value="Creatinase/aminopeptidase"/>
    <property type="match status" value="1"/>
</dbReference>
<reference key="1">
    <citation type="journal article" date="2000" name="EMBO J.">
        <title>Identification of eukaryotic peptide deformylases reveals universality of N-terminal protein processing mechanisms.</title>
        <authorList>
            <person name="Giglione C."/>
            <person name="Serero A."/>
            <person name="Pierre M."/>
            <person name="Boisson B."/>
            <person name="Meinnel T."/>
        </authorList>
    </citation>
    <scope>NUCLEOTIDE SEQUENCE [MRNA]</scope>
    <scope>TISSUE SPECIFICITY</scope>
    <scope>SUBCELLULAR LOCATION</scope>
</reference>
<reference key="2">
    <citation type="journal article" date="2000" name="DNA Res.">
        <title>Structural analysis of Arabidopsis thaliana chromosome 3. I. Sequence features of the regions of 4,504,864 bp covered by sixty P1 and TAC clones.</title>
        <authorList>
            <person name="Sato S."/>
            <person name="Nakamura Y."/>
            <person name="Kaneko T."/>
            <person name="Katoh T."/>
            <person name="Asamizu E."/>
            <person name="Tabata S."/>
        </authorList>
    </citation>
    <scope>NUCLEOTIDE SEQUENCE [LARGE SCALE GENOMIC DNA]</scope>
    <source>
        <strain>cv. Columbia</strain>
    </source>
</reference>
<reference key="3">
    <citation type="journal article" date="2017" name="Plant J.">
        <title>Araport11: a complete reannotation of the Arabidopsis thaliana reference genome.</title>
        <authorList>
            <person name="Cheng C.Y."/>
            <person name="Krishnakumar V."/>
            <person name="Chan A.P."/>
            <person name="Thibaud-Nissen F."/>
            <person name="Schobel S."/>
            <person name="Town C.D."/>
        </authorList>
    </citation>
    <scope>GENOME REANNOTATION</scope>
    <source>
        <strain>cv. Columbia</strain>
    </source>
</reference>
<accession>Q9FV51</accession>
<accession>Q9LS05</accession>